<gene>
    <name evidence="1" type="primary">rnc</name>
    <name type="ordered locus">LBL_0940</name>
</gene>
<reference key="1">
    <citation type="journal article" date="2006" name="Proc. Natl. Acad. Sci. U.S.A.">
        <title>Genome reduction in Leptospira borgpetersenii reflects limited transmission potential.</title>
        <authorList>
            <person name="Bulach D.M."/>
            <person name="Zuerner R.L."/>
            <person name="Wilson P."/>
            <person name="Seemann T."/>
            <person name="McGrath A."/>
            <person name="Cullen P.A."/>
            <person name="Davis J."/>
            <person name="Johnson M."/>
            <person name="Kuczek E."/>
            <person name="Alt D.P."/>
            <person name="Peterson-Burch B."/>
            <person name="Coppel R.L."/>
            <person name="Rood J.I."/>
            <person name="Davies J.K."/>
            <person name="Adler B."/>
        </authorList>
    </citation>
    <scope>NUCLEOTIDE SEQUENCE [LARGE SCALE GENOMIC DNA]</scope>
    <source>
        <strain>L550</strain>
    </source>
</reference>
<dbReference type="EC" id="3.1.26.3" evidence="1"/>
<dbReference type="EMBL" id="CP000348">
    <property type="protein sequence ID" value="ABJ78481.1"/>
    <property type="molecule type" value="Genomic_DNA"/>
</dbReference>
<dbReference type="RefSeq" id="WP_011669764.1">
    <property type="nucleotide sequence ID" value="NC_008508.1"/>
</dbReference>
<dbReference type="SMR" id="Q053L4"/>
<dbReference type="KEGG" id="lbl:LBL_0940"/>
<dbReference type="HOGENOM" id="CLU_000907_1_3_12"/>
<dbReference type="GO" id="GO:0005737">
    <property type="term" value="C:cytoplasm"/>
    <property type="evidence" value="ECO:0007669"/>
    <property type="project" value="UniProtKB-SubCell"/>
</dbReference>
<dbReference type="GO" id="GO:0003725">
    <property type="term" value="F:double-stranded RNA binding"/>
    <property type="evidence" value="ECO:0007669"/>
    <property type="project" value="TreeGrafter"/>
</dbReference>
<dbReference type="GO" id="GO:0046872">
    <property type="term" value="F:metal ion binding"/>
    <property type="evidence" value="ECO:0007669"/>
    <property type="project" value="UniProtKB-KW"/>
</dbReference>
<dbReference type="GO" id="GO:0004525">
    <property type="term" value="F:ribonuclease III activity"/>
    <property type="evidence" value="ECO:0007669"/>
    <property type="project" value="UniProtKB-UniRule"/>
</dbReference>
<dbReference type="GO" id="GO:0019843">
    <property type="term" value="F:rRNA binding"/>
    <property type="evidence" value="ECO:0007669"/>
    <property type="project" value="UniProtKB-KW"/>
</dbReference>
<dbReference type="GO" id="GO:0006397">
    <property type="term" value="P:mRNA processing"/>
    <property type="evidence" value="ECO:0007669"/>
    <property type="project" value="UniProtKB-UniRule"/>
</dbReference>
<dbReference type="GO" id="GO:0010468">
    <property type="term" value="P:regulation of gene expression"/>
    <property type="evidence" value="ECO:0007669"/>
    <property type="project" value="TreeGrafter"/>
</dbReference>
<dbReference type="GO" id="GO:0006364">
    <property type="term" value="P:rRNA processing"/>
    <property type="evidence" value="ECO:0007669"/>
    <property type="project" value="UniProtKB-UniRule"/>
</dbReference>
<dbReference type="GO" id="GO:0008033">
    <property type="term" value="P:tRNA processing"/>
    <property type="evidence" value="ECO:0007669"/>
    <property type="project" value="UniProtKB-KW"/>
</dbReference>
<dbReference type="CDD" id="cd10845">
    <property type="entry name" value="DSRM_RNAse_III_family"/>
    <property type="match status" value="1"/>
</dbReference>
<dbReference type="CDD" id="cd00593">
    <property type="entry name" value="RIBOc"/>
    <property type="match status" value="1"/>
</dbReference>
<dbReference type="FunFam" id="1.10.1520.10:FF:000001">
    <property type="entry name" value="Ribonuclease 3"/>
    <property type="match status" value="1"/>
</dbReference>
<dbReference type="FunFam" id="3.30.160.20:FF:000003">
    <property type="entry name" value="Ribonuclease 3"/>
    <property type="match status" value="1"/>
</dbReference>
<dbReference type="Gene3D" id="3.30.160.20">
    <property type="match status" value="1"/>
</dbReference>
<dbReference type="Gene3D" id="1.10.1520.10">
    <property type="entry name" value="Ribonuclease III domain"/>
    <property type="match status" value="1"/>
</dbReference>
<dbReference type="HAMAP" id="MF_00104">
    <property type="entry name" value="RNase_III"/>
    <property type="match status" value="1"/>
</dbReference>
<dbReference type="InterPro" id="IPR014720">
    <property type="entry name" value="dsRBD_dom"/>
</dbReference>
<dbReference type="InterPro" id="IPR011907">
    <property type="entry name" value="RNase_III"/>
</dbReference>
<dbReference type="InterPro" id="IPR000999">
    <property type="entry name" value="RNase_III_dom"/>
</dbReference>
<dbReference type="InterPro" id="IPR036389">
    <property type="entry name" value="RNase_III_sf"/>
</dbReference>
<dbReference type="NCBIfam" id="TIGR02191">
    <property type="entry name" value="RNaseIII"/>
    <property type="match status" value="1"/>
</dbReference>
<dbReference type="PANTHER" id="PTHR11207:SF0">
    <property type="entry name" value="RIBONUCLEASE 3"/>
    <property type="match status" value="1"/>
</dbReference>
<dbReference type="PANTHER" id="PTHR11207">
    <property type="entry name" value="RIBONUCLEASE III"/>
    <property type="match status" value="1"/>
</dbReference>
<dbReference type="Pfam" id="PF00035">
    <property type="entry name" value="dsrm"/>
    <property type="match status" value="1"/>
</dbReference>
<dbReference type="Pfam" id="PF14622">
    <property type="entry name" value="Ribonucleas_3_3"/>
    <property type="match status" value="1"/>
</dbReference>
<dbReference type="SMART" id="SM00358">
    <property type="entry name" value="DSRM"/>
    <property type="match status" value="1"/>
</dbReference>
<dbReference type="SMART" id="SM00535">
    <property type="entry name" value="RIBOc"/>
    <property type="match status" value="1"/>
</dbReference>
<dbReference type="SUPFAM" id="SSF54768">
    <property type="entry name" value="dsRNA-binding domain-like"/>
    <property type="match status" value="1"/>
</dbReference>
<dbReference type="SUPFAM" id="SSF69065">
    <property type="entry name" value="RNase III domain-like"/>
    <property type="match status" value="1"/>
</dbReference>
<dbReference type="PROSITE" id="PS50137">
    <property type="entry name" value="DS_RBD"/>
    <property type="match status" value="1"/>
</dbReference>
<dbReference type="PROSITE" id="PS00517">
    <property type="entry name" value="RNASE_3_1"/>
    <property type="match status" value="1"/>
</dbReference>
<dbReference type="PROSITE" id="PS50142">
    <property type="entry name" value="RNASE_3_2"/>
    <property type="match status" value="1"/>
</dbReference>
<sequence length="247" mass="28308">MVFKKTQPSPSLKNPERIQSFKKLSKKIGIKFSKIEYYNTAFIHSSYKNENPEILEDNERLEFLGDSVLGLVAARSLFQKYPKASEGELSRIKSKIVSTPILNSIAEKLNLGEYLLLGKGEKNSQGKGRRKIAANLFESLVGAIYLDRGFEVAEKFIVQHLLEFAENPDMEESVRDYKTQLQEYSQKHFKTLPVYRMKGESGPDHSKMFQVSVRIRDQWEASGYGASKKIAEQNAAKELYIRIRRGF</sequence>
<proteinExistence type="inferred from homology"/>
<accession>Q053L4</accession>
<comment type="function">
    <text evidence="1">Digests double-stranded RNA. Involved in the processing of primary rRNA transcript to yield the immediate precursors to the large and small rRNAs (23S and 16S). Processes some mRNAs, and tRNAs when they are encoded in the rRNA operon. Processes pre-crRNA and tracrRNA of type II CRISPR loci if present in the organism.</text>
</comment>
<comment type="catalytic activity">
    <reaction evidence="1">
        <text>Endonucleolytic cleavage to 5'-phosphomonoester.</text>
        <dbReference type="EC" id="3.1.26.3"/>
    </reaction>
</comment>
<comment type="cofactor">
    <cofactor evidence="1">
        <name>Mg(2+)</name>
        <dbReference type="ChEBI" id="CHEBI:18420"/>
    </cofactor>
</comment>
<comment type="subunit">
    <text evidence="1">Homodimer.</text>
</comment>
<comment type="subcellular location">
    <subcellularLocation>
        <location evidence="1">Cytoplasm</location>
    </subcellularLocation>
</comment>
<comment type="similarity">
    <text evidence="1">Belongs to the ribonuclease III family.</text>
</comment>
<organism>
    <name type="scientific">Leptospira borgpetersenii serovar Hardjo-bovis (strain L550)</name>
    <dbReference type="NCBI Taxonomy" id="355276"/>
    <lineage>
        <taxon>Bacteria</taxon>
        <taxon>Pseudomonadati</taxon>
        <taxon>Spirochaetota</taxon>
        <taxon>Spirochaetia</taxon>
        <taxon>Leptospirales</taxon>
        <taxon>Leptospiraceae</taxon>
        <taxon>Leptospira</taxon>
    </lineage>
</organism>
<name>RNC_LEPBL</name>
<protein>
    <recommendedName>
        <fullName evidence="1">Ribonuclease 3</fullName>
        <ecNumber evidence="1">3.1.26.3</ecNumber>
    </recommendedName>
    <alternativeName>
        <fullName evidence="1">Ribonuclease III</fullName>
        <shortName evidence="1">RNase III</shortName>
    </alternativeName>
</protein>
<evidence type="ECO:0000255" key="1">
    <source>
        <dbReference type="HAMAP-Rule" id="MF_00104"/>
    </source>
</evidence>
<feature type="chain" id="PRO_1000075774" description="Ribonuclease 3">
    <location>
        <begin position="1"/>
        <end position="247"/>
    </location>
</feature>
<feature type="domain" description="RNase III" evidence="1">
    <location>
        <begin position="21"/>
        <end position="149"/>
    </location>
</feature>
<feature type="domain" description="DRBM" evidence="1">
    <location>
        <begin position="176"/>
        <end position="245"/>
    </location>
</feature>
<feature type="active site" evidence="1">
    <location>
        <position position="66"/>
    </location>
</feature>
<feature type="active site" evidence="1">
    <location>
        <position position="138"/>
    </location>
</feature>
<feature type="binding site" evidence="1">
    <location>
        <position position="62"/>
    </location>
    <ligand>
        <name>Mg(2+)</name>
        <dbReference type="ChEBI" id="CHEBI:18420"/>
    </ligand>
</feature>
<feature type="binding site" evidence="1">
    <location>
        <position position="135"/>
    </location>
    <ligand>
        <name>Mg(2+)</name>
        <dbReference type="ChEBI" id="CHEBI:18420"/>
    </ligand>
</feature>
<feature type="binding site" evidence="1">
    <location>
        <position position="138"/>
    </location>
    <ligand>
        <name>Mg(2+)</name>
        <dbReference type="ChEBI" id="CHEBI:18420"/>
    </ligand>
</feature>
<keyword id="KW-0963">Cytoplasm</keyword>
<keyword id="KW-0255">Endonuclease</keyword>
<keyword id="KW-0378">Hydrolase</keyword>
<keyword id="KW-0460">Magnesium</keyword>
<keyword id="KW-0479">Metal-binding</keyword>
<keyword id="KW-0507">mRNA processing</keyword>
<keyword id="KW-0540">Nuclease</keyword>
<keyword id="KW-0694">RNA-binding</keyword>
<keyword id="KW-0698">rRNA processing</keyword>
<keyword id="KW-0699">rRNA-binding</keyword>
<keyword id="KW-0819">tRNA processing</keyword>